<dbReference type="EC" id="2.7.4.3"/>
<dbReference type="EMBL" id="AP000615">
    <property type="protein sequence ID" value="BAA85412.1"/>
    <property type="status" value="ALT_SEQ"/>
    <property type="molecule type" value="Genomic_DNA"/>
</dbReference>
<dbReference type="EMBL" id="DP000009">
    <property type="protein sequence ID" value="ABF93799.1"/>
    <property type="molecule type" value="Genomic_DNA"/>
</dbReference>
<dbReference type="EMBL" id="AP008209">
    <property type="protein sequence ID" value="BAF10768.1"/>
    <property type="molecule type" value="Genomic_DNA"/>
</dbReference>
<dbReference type="EMBL" id="AP014959">
    <property type="protein sequence ID" value="BAS82125.1"/>
    <property type="molecule type" value="Genomic_DNA"/>
</dbReference>
<dbReference type="EMBL" id="AK070255">
    <property type="status" value="NOT_ANNOTATED_CDS"/>
    <property type="molecule type" value="mRNA"/>
</dbReference>
<dbReference type="RefSeq" id="XP_015627822.1">
    <property type="nucleotide sequence ID" value="XM_015772336.1"/>
</dbReference>
<dbReference type="SMR" id="Q10S93"/>
<dbReference type="FunCoup" id="Q10S93">
    <property type="interactions" value="549"/>
</dbReference>
<dbReference type="STRING" id="39947.Q10S93"/>
<dbReference type="PaxDb" id="39947-Q10S93"/>
<dbReference type="EnsemblPlants" id="Os03t0130400-01">
    <property type="protein sequence ID" value="Os03t0130400-01"/>
    <property type="gene ID" value="Os03g0130400"/>
</dbReference>
<dbReference type="Gramene" id="Os03t0130400-01">
    <property type="protein sequence ID" value="Os03t0130400-01"/>
    <property type="gene ID" value="Os03g0130400"/>
</dbReference>
<dbReference type="KEGG" id="dosa:Os03g0130400"/>
<dbReference type="eggNOG" id="KOG3078">
    <property type="taxonomic scope" value="Eukaryota"/>
</dbReference>
<dbReference type="HOGENOM" id="CLU_032354_2_1_1"/>
<dbReference type="InParanoid" id="Q10S93"/>
<dbReference type="OMA" id="SCTMLIC"/>
<dbReference type="OrthoDB" id="439792at2759"/>
<dbReference type="Proteomes" id="UP000000763">
    <property type="component" value="Chromosome 3"/>
</dbReference>
<dbReference type="Proteomes" id="UP000059680">
    <property type="component" value="Chromosome 3"/>
</dbReference>
<dbReference type="ExpressionAtlas" id="Q10S93">
    <property type="expression patterns" value="baseline and differential"/>
</dbReference>
<dbReference type="GO" id="GO:0009570">
    <property type="term" value="C:chloroplast stroma"/>
    <property type="evidence" value="ECO:0007669"/>
    <property type="project" value="EnsemblPlants"/>
</dbReference>
<dbReference type="GO" id="GO:0005737">
    <property type="term" value="C:cytoplasm"/>
    <property type="evidence" value="ECO:0000318"/>
    <property type="project" value="GO_Central"/>
</dbReference>
<dbReference type="GO" id="GO:0005739">
    <property type="term" value="C:mitochondrion"/>
    <property type="evidence" value="ECO:0000318"/>
    <property type="project" value="GO_Central"/>
</dbReference>
<dbReference type="GO" id="GO:0004017">
    <property type="term" value="F:adenylate kinase activity"/>
    <property type="evidence" value="ECO:0000318"/>
    <property type="project" value="GO_Central"/>
</dbReference>
<dbReference type="GO" id="GO:0005524">
    <property type="term" value="F:ATP binding"/>
    <property type="evidence" value="ECO:0007669"/>
    <property type="project" value="UniProtKB-KW"/>
</dbReference>
<dbReference type="GO" id="GO:0008652">
    <property type="term" value="P:amino acid biosynthetic process"/>
    <property type="evidence" value="ECO:0007669"/>
    <property type="project" value="EnsemblPlants"/>
</dbReference>
<dbReference type="GO" id="GO:0048364">
    <property type="term" value="P:root development"/>
    <property type="evidence" value="ECO:0007669"/>
    <property type="project" value="EnsemblPlants"/>
</dbReference>
<dbReference type="GO" id="GO:0048367">
    <property type="term" value="P:shoot system development"/>
    <property type="evidence" value="ECO:0007669"/>
    <property type="project" value="EnsemblPlants"/>
</dbReference>
<dbReference type="CDD" id="cd01428">
    <property type="entry name" value="ADK"/>
    <property type="match status" value="1"/>
</dbReference>
<dbReference type="Gene3D" id="3.40.50.300">
    <property type="entry name" value="P-loop containing nucleotide triphosphate hydrolases"/>
    <property type="match status" value="1"/>
</dbReference>
<dbReference type="HAMAP" id="MF_00235">
    <property type="entry name" value="Adenylate_kinase_Adk"/>
    <property type="match status" value="1"/>
</dbReference>
<dbReference type="InterPro" id="IPR006259">
    <property type="entry name" value="Adenyl_kin_sub"/>
</dbReference>
<dbReference type="InterPro" id="IPR000850">
    <property type="entry name" value="Adenylat/UMP-CMP_kin"/>
</dbReference>
<dbReference type="InterPro" id="IPR033690">
    <property type="entry name" value="Adenylat_kinase_CS"/>
</dbReference>
<dbReference type="InterPro" id="IPR027417">
    <property type="entry name" value="P-loop_NTPase"/>
</dbReference>
<dbReference type="NCBIfam" id="TIGR01351">
    <property type="entry name" value="adk"/>
    <property type="match status" value="1"/>
</dbReference>
<dbReference type="PANTHER" id="PTHR23359">
    <property type="entry name" value="NUCLEOTIDE KINASE"/>
    <property type="match status" value="1"/>
</dbReference>
<dbReference type="Pfam" id="PF00406">
    <property type="entry name" value="ADK"/>
    <property type="match status" value="1"/>
</dbReference>
<dbReference type="PRINTS" id="PR00094">
    <property type="entry name" value="ADENYLTKNASE"/>
</dbReference>
<dbReference type="SUPFAM" id="SSF52540">
    <property type="entry name" value="P-loop containing nucleoside triphosphate hydrolases"/>
    <property type="match status" value="1"/>
</dbReference>
<dbReference type="PROSITE" id="PS00113">
    <property type="entry name" value="ADENYLATE_KINASE"/>
    <property type="match status" value="1"/>
</dbReference>
<reference key="1">
    <citation type="journal article" date="2005" name="Genome Res.">
        <title>Sequence, annotation, and analysis of synteny between rice chromosome 3 and diverged grass species.</title>
        <authorList>
            <consortium name="The rice chromosome 3 sequencing consortium"/>
            <person name="Buell C.R."/>
            <person name="Yuan Q."/>
            <person name="Ouyang S."/>
            <person name="Liu J."/>
            <person name="Zhu W."/>
            <person name="Wang A."/>
            <person name="Maiti R."/>
            <person name="Haas B."/>
            <person name="Wortman J."/>
            <person name="Pertea M."/>
            <person name="Jones K.M."/>
            <person name="Kim M."/>
            <person name="Overton L."/>
            <person name="Tsitrin T."/>
            <person name="Fadrosh D."/>
            <person name="Bera J."/>
            <person name="Weaver B."/>
            <person name="Jin S."/>
            <person name="Johri S."/>
            <person name="Reardon M."/>
            <person name="Webb K."/>
            <person name="Hill J."/>
            <person name="Moffat K."/>
            <person name="Tallon L."/>
            <person name="Van Aken S."/>
            <person name="Lewis M."/>
            <person name="Utterback T."/>
            <person name="Feldblyum T."/>
            <person name="Zismann V."/>
            <person name="Iobst S."/>
            <person name="Hsiao J."/>
            <person name="de Vazeille A.R."/>
            <person name="Salzberg S.L."/>
            <person name="White O."/>
            <person name="Fraser C.M."/>
            <person name="Yu Y."/>
            <person name="Kim H."/>
            <person name="Rambo T."/>
            <person name="Currie J."/>
            <person name="Collura K."/>
            <person name="Kernodle-Thompson S."/>
            <person name="Wei F."/>
            <person name="Kudrna K."/>
            <person name="Ammiraju J.S.S."/>
            <person name="Luo M."/>
            <person name="Goicoechea J.L."/>
            <person name="Wing R.A."/>
            <person name="Henry D."/>
            <person name="Oates R."/>
            <person name="Palmer M."/>
            <person name="Pries G."/>
            <person name="Saski C."/>
            <person name="Simmons J."/>
            <person name="Soderlund C."/>
            <person name="Nelson W."/>
            <person name="de la Bastide M."/>
            <person name="Spiegel L."/>
            <person name="Nascimento L."/>
            <person name="Huang E."/>
            <person name="Preston R."/>
            <person name="Zutavern T."/>
            <person name="Palmer L."/>
            <person name="O'Shaughnessy A."/>
            <person name="Dike S."/>
            <person name="McCombie W.R."/>
            <person name="Minx P."/>
            <person name="Cordum H."/>
            <person name="Wilson R."/>
            <person name="Jin W."/>
            <person name="Lee H.R."/>
            <person name="Jiang J."/>
            <person name="Jackson S."/>
        </authorList>
    </citation>
    <scope>NUCLEOTIDE SEQUENCE [LARGE SCALE GENOMIC DNA]</scope>
    <source>
        <strain>cv. Nipponbare</strain>
    </source>
</reference>
<reference key="2">
    <citation type="journal article" date="2005" name="Nature">
        <title>The map-based sequence of the rice genome.</title>
        <authorList>
            <consortium name="International rice genome sequencing project (IRGSP)"/>
        </authorList>
    </citation>
    <scope>NUCLEOTIDE SEQUENCE [LARGE SCALE GENOMIC DNA]</scope>
    <source>
        <strain>cv. Nipponbare</strain>
    </source>
</reference>
<reference key="3">
    <citation type="journal article" date="2008" name="Nucleic Acids Res.">
        <title>The rice annotation project database (RAP-DB): 2008 update.</title>
        <authorList>
            <consortium name="The rice annotation project (RAP)"/>
        </authorList>
    </citation>
    <scope>GENOME REANNOTATION</scope>
    <source>
        <strain>cv. Nipponbare</strain>
    </source>
</reference>
<reference key="4">
    <citation type="journal article" date="2013" name="Rice">
        <title>Improvement of the Oryza sativa Nipponbare reference genome using next generation sequence and optical map data.</title>
        <authorList>
            <person name="Kawahara Y."/>
            <person name="de la Bastide M."/>
            <person name="Hamilton J.P."/>
            <person name="Kanamori H."/>
            <person name="McCombie W.R."/>
            <person name="Ouyang S."/>
            <person name="Schwartz D.C."/>
            <person name="Tanaka T."/>
            <person name="Wu J."/>
            <person name="Zhou S."/>
            <person name="Childs K.L."/>
            <person name="Davidson R.M."/>
            <person name="Lin H."/>
            <person name="Quesada-Ocampo L."/>
            <person name="Vaillancourt B."/>
            <person name="Sakai H."/>
            <person name="Lee S.S."/>
            <person name="Kim J."/>
            <person name="Numa H."/>
            <person name="Itoh T."/>
            <person name="Buell C.R."/>
            <person name="Matsumoto T."/>
        </authorList>
    </citation>
    <scope>GENOME REANNOTATION</scope>
    <source>
        <strain>cv. Nipponbare</strain>
    </source>
</reference>
<reference key="5">
    <citation type="journal article" date="2003" name="Science">
        <title>Collection, mapping, and annotation of over 28,000 cDNA clones from japonica rice.</title>
        <authorList>
            <consortium name="The rice full-length cDNA consortium"/>
        </authorList>
    </citation>
    <scope>NUCLEOTIDE SEQUENCE [LARGE SCALE MRNA]</scope>
    <source>
        <strain>cv. Nipponbare</strain>
    </source>
</reference>
<sequence>MAAVQRLLRASASGGAAAAAAAARRRMSTAVAPEQTPAAAAFPFAAAAGRARQRVAEERNVQWVFLGCPGVGKGTYASRLSRLLGVPHIATGDLVRDELASSGPLSVQLAEIVNQGKLVSDEIIINLLSKRLKKGEEQGESGFILDGFPRTVKQAEILDGVTDIDMVVNLKLREDVLVEKCLGRRICGQCGKNFNLACIDVKGENGLPPIYMAPLLPPNNCMSKLITRADDTEEVVRNRLQIYNDMSQPVEGFYRQQGKLLEFDLPGGIPESWPKLLHVLNLEDQEEMKLATA</sequence>
<name>KAD1_ORYSJ</name>
<protein>
    <recommendedName>
        <fullName>Probable adenylate kinase 1, chloroplastic</fullName>
        <ecNumber>2.7.4.3</ecNumber>
    </recommendedName>
    <alternativeName>
        <fullName>Adenylate monophosphate kinase 1</fullName>
    </alternativeName>
</protein>
<organism>
    <name type="scientific">Oryza sativa subsp. japonica</name>
    <name type="common">Rice</name>
    <dbReference type="NCBI Taxonomy" id="39947"/>
    <lineage>
        <taxon>Eukaryota</taxon>
        <taxon>Viridiplantae</taxon>
        <taxon>Streptophyta</taxon>
        <taxon>Embryophyta</taxon>
        <taxon>Tracheophyta</taxon>
        <taxon>Spermatophyta</taxon>
        <taxon>Magnoliopsida</taxon>
        <taxon>Liliopsida</taxon>
        <taxon>Poales</taxon>
        <taxon>Poaceae</taxon>
        <taxon>BOP clade</taxon>
        <taxon>Oryzoideae</taxon>
        <taxon>Oryzeae</taxon>
        <taxon>Oryzinae</taxon>
        <taxon>Oryza</taxon>
        <taxon>Oryza sativa</taxon>
    </lineage>
</organism>
<gene>
    <name type="ordered locus">Os03g0130400</name>
    <name type="ordered locus">LOC_Os03g03820</name>
</gene>
<accession>Q10S93</accession>
<accession>A0A0P0VSL2</accession>
<accession>Q9SNJ4</accession>
<evidence type="ECO:0000250" key="1">
    <source>
        <dbReference type="UniProtKB" id="P69441"/>
    </source>
</evidence>
<evidence type="ECO:0000255" key="2"/>
<evidence type="ECO:0000305" key="3"/>
<comment type="function">
    <text evidence="1">Catalyzes the reversible transfer of the terminal phosphate group between ATP and AMP. Plays an important role in cellular energy homeostasis and in adenine nucleotide metabolism.</text>
</comment>
<comment type="catalytic activity">
    <reaction evidence="1">
        <text>AMP + ATP = 2 ADP</text>
        <dbReference type="Rhea" id="RHEA:12973"/>
        <dbReference type="ChEBI" id="CHEBI:30616"/>
        <dbReference type="ChEBI" id="CHEBI:456215"/>
        <dbReference type="ChEBI" id="CHEBI:456216"/>
        <dbReference type="EC" id="2.7.4.3"/>
    </reaction>
</comment>
<comment type="subcellular location">
    <subcellularLocation>
        <location evidence="3">Mitochondrion</location>
    </subcellularLocation>
</comment>
<comment type="similarity">
    <text evidence="3">Belongs to the adenylate kinase family.</text>
</comment>
<comment type="sequence caution" evidence="3">
    <conflict type="erroneous gene model prediction">
        <sequence resource="EMBL-CDS" id="BAA85412"/>
    </conflict>
</comment>
<feature type="transit peptide" description="Mitochondrion" evidence="2">
    <location>
        <begin position="1"/>
        <end position="26"/>
    </location>
</feature>
<feature type="chain" id="PRO_0000430116" description="Probable adenylate kinase 1, chloroplastic">
    <location>
        <begin position="27"/>
        <end position="293"/>
    </location>
</feature>
<feature type="region of interest" description="NMP" evidence="1">
    <location>
        <begin position="90"/>
        <end position="119"/>
    </location>
</feature>
<feature type="region of interest" description="LID" evidence="1">
    <location>
        <begin position="183"/>
        <end position="231"/>
    </location>
</feature>
<feature type="binding site" evidence="1">
    <location>
        <begin position="70"/>
        <end position="75"/>
    </location>
    <ligand>
        <name>ATP</name>
        <dbReference type="ChEBI" id="CHEBI:30616"/>
    </ligand>
</feature>
<feature type="binding site" evidence="1">
    <location>
        <position position="91"/>
    </location>
    <ligand>
        <name>AMP</name>
        <dbReference type="ChEBI" id="CHEBI:456215"/>
    </ligand>
</feature>
<feature type="binding site" evidence="1">
    <location>
        <position position="96"/>
    </location>
    <ligand>
        <name>AMP</name>
        <dbReference type="ChEBI" id="CHEBI:456215"/>
    </ligand>
</feature>
<feature type="binding site" evidence="1">
    <location>
        <begin position="117"/>
        <end position="119"/>
    </location>
    <ligand>
        <name>AMP</name>
        <dbReference type="ChEBI" id="CHEBI:456215"/>
    </ligand>
</feature>
<feature type="binding site" evidence="1">
    <location>
        <begin position="147"/>
        <end position="150"/>
    </location>
    <ligand>
        <name>AMP</name>
        <dbReference type="ChEBI" id="CHEBI:456215"/>
    </ligand>
</feature>
<feature type="binding site" evidence="1">
    <location>
        <position position="154"/>
    </location>
    <ligand>
        <name>AMP</name>
        <dbReference type="ChEBI" id="CHEBI:456215"/>
    </ligand>
</feature>
<feature type="binding site" evidence="1">
    <location>
        <position position="184"/>
    </location>
    <ligand>
        <name>ATP</name>
        <dbReference type="ChEBI" id="CHEBI:30616"/>
    </ligand>
</feature>
<feature type="binding site" evidence="1">
    <location>
        <begin position="193"/>
        <end position="194"/>
    </location>
    <ligand>
        <name>ATP</name>
        <dbReference type="ChEBI" id="CHEBI:30616"/>
    </ligand>
</feature>
<feature type="binding site" evidence="1">
    <location>
        <position position="228"/>
    </location>
    <ligand>
        <name>AMP</name>
        <dbReference type="ChEBI" id="CHEBI:456215"/>
    </ligand>
</feature>
<feature type="binding site" evidence="1">
    <location>
        <position position="239"/>
    </location>
    <ligand>
        <name>AMP</name>
        <dbReference type="ChEBI" id="CHEBI:456215"/>
    </ligand>
</feature>
<feature type="sequence conflict" description="In Ref. 5; AK070255." evidence="3" ref="5">
    <original>L</original>
    <variation>S</variation>
    <location>
        <position position="172"/>
    </location>
</feature>
<proteinExistence type="evidence at transcript level"/>
<keyword id="KW-0067">ATP-binding</keyword>
<keyword id="KW-0418">Kinase</keyword>
<keyword id="KW-0496">Mitochondrion</keyword>
<keyword id="KW-0547">Nucleotide-binding</keyword>
<keyword id="KW-1185">Reference proteome</keyword>
<keyword id="KW-0808">Transferase</keyword>
<keyword id="KW-0809">Transit peptide</keyword>